<accession>B6JEY4</accession>
<accession>F8BZA8</accession>
<dbReference type="EMBL" id="CP001196">
    <property type="protein sequence ID" value="ACI92824.1"/>
    <property type="molecule type" value="Genomic_DNA"/>
</dbReference>
<dbReference type="EMBL" id="CP002826">
    <property type="protein sequence ID" value="AEI07011.1"/>
    <property type="molecule type" value="Genomic_DNA"/>
</dbReference>
<dbReference type="RefSeq" id="WP_012562853.1">
    <property type="nucleotide sequence ID" value="NC_015684.1"/>
</dbReference>
<dbReference type="SMR" id="B6JEY4"/>
<dbReference type="STRING" id="504832.OCA5_c23110"/>
<dbReference type="KEGG" id="oca:OCAR_5696"/>
<dbReference type="KEGG" id="ocg:OCA5_c23110"/>
<dbReference type="PATRIC" id="fig|504832.7.peg.2436"/>
<dbReference type="eggNOG" id="COG0200">
    <property type="taxonomic scope" value="Bacteria"/>
</dbReference>
<dbReference type="HOGENOM" id="CLU_055188_4_0_5"/>
<dbReference type="OrthoDB" id="9810293at2"/>
<dbReference type="Proteomes" id="UP000007730">
    <property type="component" value="Chromosome"/>
</dbReference>
<dbReference type="GO" id="GO:0022625">
    <property type="term" value="C:cytosolic large ribosomal subunit"/>
    <property type="evidence" value="ECO:0007669"/>
    <property type="project" value="TreeGrafter"/>
</dbReference>
<dbReference type="GO" id="GO:0019843">
    <property type="term" value="F:rRNA binding"/>
    <property type="evidence" value="ECO:0007669"/>
    <property type="project" value="UniProtKB-UniRule"/>
</dbReference>
<dbReference type="GO" id="GO:0003735">
    <property type="term" value="F:structural constituent of ribosome"/>
    <property type="evidence" value="ECO:0007669"/>
    <property type="project" value="InterPro"/>
</dbReference>
<dbReference type="GO" id="GO:0006412">
    <property type="term" value="P:translation"/>
    <property type="evidence" value="ECO:0007669"/>
    <property type="project" value="UniProtKB-UniRule"/>
</dbReference>
<dbReference type="Gene3D" id="3.100.10.10">
    <property type="match status" value="1"/>
</dbReference>
<dbReference type="HAMAP" id="MF_01341">
    <property type="entry name" value="Ribosomal_uL15"/>
    <property type="match status" value="1"/>
</dbReference>
<dbReference type="InterPro" id="IPR030878">
    <property type="entry name" value="Ribosomal_uL15"/>
</dbReference>
<dbReference type="InterPro" id="IPR021131">
    <property type="entry name" value="Ribosomal_uL15/eL18"/>
</dbReference>
<dbReference type="InterPro" id="IPR036227">
    <property type="entry name" value="Ribosomal_uL15/eL18_sf"/>
</dbReference>
<dbReference type="InterPro" id="IPR005749">
    <property type="entry name" value="Ribosomal_uL15_bac-type"/>
</dbReference>
<dbReference type="InterPro" id="IPR001196">
    <property type="entry name" value="Ribosomal_uL15_CS"/>
</dbReference>
<dbReference type="NCBIfam" id="TIGR01071">
    <property type="entry name" value="rplO_bact"/>
    <property type="match status" value="1"/>
</dbReference>
<dbReference type="PANTHER" id="PTHR12934">
    <property type="entry name" value="50S RIBOSOMAL PROTEIN L15"/>
    <property type="match status" value="1"/>
</dbReference>
<dbReference type="PANTHER" id="PTHR12934:SF11">
    <property type="entry name" value="LARGE RIBOSOMAL SUBUNIT PROTEIN UL15M"/>
    <property type="match status" value="1"/>
</dbReference>
<dbReference type="Pfam" id="PF00828">
    <property type="entry name" value="Ribosomal_L27A"/>
    <property type="match status" value="1"/>
</dbReference>
<dbReference type="SUPFAM" id="SSF52080">
    <property type="entry name" value="Ribosomal proteins L15p and L18e"/>
    <property type="match status" value="1"/>
</dbReference>
<dbReference type="PROSITE" id="PS00475">
    <property type="entry name" value="RIBOSOMAL_L15"/>
    <property type="match status" value="1"/>
</dbReference>
<protein>
    <recommendedName>
        <fullName evidence="1">Large ribosomal subunit protein uL15</fullName>
    </recommendedName>
    <alternativeName>
        <fullName evidence="3">50S ribosomal protein L15</fullName>
    </alternativeName>
</protein>
<reference key="1">
    <citation type="journal article" date="2008" name="J. Bacteriol.">
        <title>Genome sequence of the chemolithoautotrophic bacterium Oligotropha carboxidovorans OM5T.</title>
        <authorList>
            <person name="Paul D."/>
            <person name="Bridges S."/>
            <person name="Burgess S.C."/>
            <person name="Dandass Y."/>
            <person name="Lawrence M.L."/>
        </authorList>
    </citation>
    <scope>NUCLEOTIDE SEQUENCE [LARGE SCALE GENOMIC DNA]</scope>
    <source>
        <strain>ATCC 49405 / DSM 1227 / KCTC 32145 / OM5</strain>
    </source>
</reference>
<reference key="2">
    <citation type="journal article" date="2011" name="J. Bacteriol.">
        <title>Complete genome sequences of the chemolithoautotrophic Oligotropha carboxidovorans strains OM4 and OM5.</title>
        <authorList>
            <person name="Volland S."/>
            <person name="Rachinger M."/>
            <person name="Strittmatter A."/>
            <person name="Daniel R."/>
            <person name="Gottschalk G."/>
            <person name="Meyer O."/>
        </authorList>
    </citation>
    <scope>NUCLEOTIDE SEQUENCE [LARGE SCALE GENOMIC DNA]</scope>
    <source>
        <strain>ATCC 49405 / DSM 1227 / KCTC 32145 / OM5</strain>
    </source>
</reference>
<gene>
    <name evidence="1" type="primary">rplO</name>
    <name type="ordered locus">OCAR_5696</name>
    <name type="ordered locus">OCA5_c23110</name>
</gene>
<name>RL15_AFIC5</name>
<evidence type="ECO:0000255" key="1">
    <source>
        <dbReference type="HAMAP-Rule" id="MF_01341"/>
    </source>
</evidence>
<evidence type="ECO:0000256" key="2">
    <source>
        <dbReference type="SAM" id="MobiDB-lite"/>
    </source>
</evidence>
<evidence type="ECO:0000305" key="3"/>
<feature type="chain" id="PRO_1000142851" description="Large ribosomal subunit protein uL15">
    <location>
        <begin position="1"/>
        <end position="163"/>
    </location>
</feature>
<feature type="region of interest" description="Disordered" evidence="2">
    <location>
        <begin position="1"/>
        <end position="43"/>
    </location>
</feature>
<feature type="compositionally biased region" description="Gly residues" evidence="2">
    <location>
        <begin position="21"/>
        <end position="37"/>
    </location>
</feature>
<comment type="function">
    <text evidence="1">Binds to the 23S rRNA.</text>
</comment>
<comment type="subunit">
    <text evidence="1">Part of the 50S ribosomal subunit.</text>
</comment>
<comment type="similarity">
    <text evidence="1">Belongs to the universal ribosomal protein uL15 family.</text>
</comment>
<organism>
    <name type="scientific">Afipia carboxidovorans (strain ATCC 49405 / DSM 1227 / KCTC 32145 / OM5)</name>
    <name type="common">Oligotropha carboxidovorans</name>
    <dbReference type="NCBI Taxonomy" id="504832"/>
    <lineage>
        <taxon>Bacteria</taxon>
        <taxon>Pseudomonadati</taxon>
        <taxon>Pseudomonadota</taxon>
        <taxon>Alphaproteobacteria</taxon>
        <taxon>Hyphomicrobiales</taxon>
        <taxon>Nitrobacteraceae</taxon>
        <taxon>Afipia</taxon>
    </lineage>
</organism>
<proteinExistence type="inferred from homology"/>
<keyword id="KW-1185">Reference proteome</keyword>
<keyword id="KW-0687">Ribonucleoprotein</keyword>
<keyword id="KW-0689">Ribosomal protein</keyword>
<keyword id="KW-0694">RNA-binding</keyword>
<keyword id="KW-0699">rRNA-binding</keyword>
<sequence>MKLNEIADNEGSRKKRTRVGRGIGSGKGKQSGRGGKGQTARSGVRIKGFEGGQMPLHRRLPKRGFNNIFRVELSEVNLDRLQDAIDAKKLDASATINAEALVKSGVLRRAKGGVRLLGRGELKSKVAIEVHGATKSAIEAVEKAGGSVKILAPKKDEGEAKAS</sequence>